<organism>
    <name type="scientific">Escherichia coli (strain UTI89 / UPEC)</name>
    <dbReference type="NCBI Taxonomy" id="364106"/>
    <lineage>
        <taxon>Bacteria</taxon>
        <taxon>Pseudomonadati</taxon>
        <taxon>Pseudomonadota</taxon>
        <taxon>Gammaproteobacteria</taxon>
        <taxon>Enterobacterales</taxon>
        <taxon>Enterobacteriaceae</taxon>
        <taxon>Escherichia</taxon>
    </lineage>
</organism>
<proteinExistence type="inferred from homology"/>
<keyword id="KW-0131">Cell cycle</keyword>
<keyword id="KW-0132">Cell division</keyword>
<keyword id="KW-0997">Cell inner membrane</keyword>
<keyword id="KW-1003">Cell membrane</keyword>
<keyword id="KW-0133">Cell shape</keyword>
<keyword id="KW-0961">Cell wall biogenesis/degradation</keyword>
<keyword id="KW-0328">Glycosyltransferase</keyword>
<keyword id="KW-0472">Membrane</keyword>
<keyword id="KW-0573">Peptidoglycan synthesis</keyword>
<keyword id="KW-0808">Transferase</keyword>
<reference key="1">
    <citation type="journal article" date="2006" name="Proc. Natl. Acad. Sci. U.S.A.">
        <title>Identification of genes subject to positive selection in uropathogenic strains of Escherichia coli: a comparative genomics approach.</title>
        <authorList>
            <person name="Chen S.L."/>
            <person name="Hung C.-S."/>
            <person name="Xu J."/>
            <person name="Reigstad C.S."/>
            <person name="Magrini V."/>
            <person name="Sabo A."/>
            <person name="Blasiar D."/>
            <person name="Bieri T."/>
            <person name="Meyer R.R."/>
            <person name="Ozersky P."/>
            <person name="Armstrong J.R."/>
            <person name="Fulton R.S."/>
            <person name="Latreille J.P."/>
            <person name="Spieth J."/>
            <person name="Hooton T.M."/>
            <person name="Mardis E.R."/>
            <person name="Hultgren S.J."/>
            <person name="Gordon J.I."/>
        </authorList>
    </citation>
    <scope>NUCLEOTIDE SEQUENCE [LARGE SCALE GENOMIC DNA]</scope>
    <source>
        <strain>UTI89 / UPEC</strain>
    </source>
</reference>
<name>MURG_ECOUT</name>
<gene>
    <name evidence="1" type="primary">murG</name>
    <name type="ordered locus">UTI89_C0099</name>
</gene>
<evidence type="ECO:0000255" key="1">
    <source>
        <dbReference type="HAMAP-Rule" id="MF_00033"/>
    </source>
</evidence>
<sequence length="355" mass="37789">MSGQGKRLMVMAGGTGGHVFPGLAVAHHLMAQGWQVRWLGTADRMEADLVPKHGIEIDFIRISGLRGKGIKALIAAPLRIFNAWRQARAIMKAYKPDVVLGMGGYVSGPGGLAAWSLGIPVVLHEQNGIAGLTNKWLAKIATKVMQAFPGAFPNAEVVGNPVRTDVLALPLPQQRLAGREGPVRVLVVGGSQGARILNQTMPQVAAKLGDSVTIWHQSGKGSQQSVEQAYAEAGQPQHKVTEFIDDMAAAYAWADVVVCRSGALTVSEIAAAGLPALFVPFQHKDRQQYWNALPLEKAGAAKIIEQSQLSVDAVANTLAGWSREILLTMAERARAASIPDATERVANEVSRAARA</sequence>
<accession>Q1RGA5</accession>
<protein>
    <recommendedName>
        <fullName evidence="1">UDP-N-acetylglucosamine--N-acetylmuramyl-(pentapeptide) pyrophosphoryl-undecaprenol N-acetylglucosamine transferase</fullName>
        <ecNumber evidence="1">2.4.1.227</ecNumber>
    </recommendedName>
    <alternativeName>
        <fullName evidence="1">Undecaprenyl-PP-MurNAc-pentapeptide-UDPGlcNAc GlcNAc transferase</fullName>
    </alternativeName>
</protein>
<feature type="chain" id="PRO_1000002643" description="UDP-N-acetylglucosamine--N-acetylmuramyl-(pentapeptide) pyrophosphoryl-undecaprenol N-acetylglucosamine transferase">
    <location>
        <begin position="1"/>
        <end position="355"/>
    </location>
</feature>
<feature type="binding site" evidence="1">
    <location>
        <begin position="15"/>
        <end position="17"/>
    </location>
    <ligand>
        <name>UDP-N-acetyl-alpha-D-glucosamine</name>
        <dbReference type="ChEBI" id="CHEBI:57705"/>
    </ligand>
</feature>
<feature type="binding site" evidence="1">
    <location>
        <position position="127"/>
    </location>
    <ligand>
        <name>UDP-N-acetyl-alpha-D-glucosamine</name>
        <dbReference type="ChEBI" id="CHEBI:57705"/>
    </ligand>
</feature>
<feature type="binding site" evidence="1">
    <location>
        <position position="163"/>
    </location>
    <ligand>
        <name>UDP-N-acetyl-alpha-D-glucosamine</name>
        <dbReference type="ChEBI" id="CHEBI:57705"/>
    </ligand>
</feature>
<feature type="binding site" evidence="1">
    <location>
        <position position="191"/>
    </location>
    <ligand>
        <name>UDP-N-acetyl-alpha-D-glucosamine</name>
        <dbReference type="ChEBI" id="CHEBI:57705"/>
    </ligand>
</feature>
<feature type="binding site" evidence="1">
    <location>
        <position position="244"/>
    </location>
    <ligand>
        <name>UDP-N-acetyl-alpha-D-glucosamine</name>
        <dbReference type="ChEBI" id="CHEBI:57705"/>
    </ligand>
</feature>
<feature type="binding site" evidence="1">
    <location>
        <begin position="263"/>
        <end position="268"/>
    </location>
    <ligand>
        <name>UDP-N-acetyl-alpha-D-glucosamine</name>
        <dbReference type="ChEBI" id="CHEBI:57705"/>
    </ligand>
</feature>
<feature type="binding site" evidence="1">
    <location>
        <position position="288"/>
    </location>
    <ligand>
        <name>UDP-N-acetyl-alpha-D-glucosamine</name>
        <dbReference type="ChEBI" id="CHEBI:57705"/>
    </ligand>
</feature>
<dbReference type="EC" id="2.4.1.227" evidence="1"/>
<dbReference type="EMBL" id="CP000243">
    <property type="protein sequence ID" value="ABE05609.1"/>
    <property type="molecule type" value="Genomic_DNA"/>
</dbReference>
<dbReference type="RefSeq" id="WP_000016562.1">
    <property type="nucleotide sequence ID" value="NZ_CP064825.1"/>
</dbReference>
<dbReference type="SMR" id="Q1RGA5"/>
<dbReference type="CAZy" id="GT28">
    <property type="family name" value="Glycosyltransferase Family 28"/>
</dbReference>
<dbReference type="KEGG" id="eci:UTI89_C0099"/>
<dbReference type="HOGENOM" id="CLU_037404_2_0_6"/>
<dbReference type="UniPathway" id="UPA00219"/>
<dbReference type="Proteomes" id="UP000001952">
    <property type="component" value="Chromosome"/>
</dbReference>
<dbReference type="GO" id="GO:0005886">
    <property type="term" value="C:plasma membrane"/>
    <property type="evidence" value="ECO:0007669"/>
    <property type="project" value="UniProtKB-SubCell"/>
</dbReference>
<dbReference type="GO" id="GO:0051991">
    <property type="term" value="F:UDP-N-acetyl-D-glucosamine:N-acetylmuramoyl-L-alanyl-D-glutamyl-meso-2,6-diaminopimelyl-D-alanyl-D-alanine-diphosphoundecaprenol 4-beta-N-acetylglucosaminlytransferase activity"/>
    <property type="evidence" value="ECO:0007669"/>
    <property type="project" value="RHEA"/>
</dbReference>
<dbReference type="GO" id="GO:0050511">
    <property type="term" value="F:undecaprenyldiphospho-muramoylpentapeptide beta-N-acetylglucosaminyltransferase activity"/>
    <property type="evidence" value="ECO:0007669"/>
    <property type="project" value="UniProtKB-UniRule"/>
</dbReference>
<dbReference type="GO" id="GO:0005975">
    <property type="term" value="P:carbohydrate metabolic process"/>
    <property type="evidence" value="ECO:0007669"/>
    <property type="project" value="InterPro"/>
</dbReference>
<dbReference type="GO" id="GO:0051301">
    <property type="term" value="P:cell division"/>
    <property type="evidence" value="ECO:0007669"/>
    <property type="project" value="UniProtKB-KW"/>
</dbReference>
<dbReference type="GO" id="GO:0071555">
    <property type="term" value="P:cell wall organization"/>
    <property type="evidence" value="ECO:0007669"/>
    <property type="project" value="UniProtKB-KW"/>
</dbReference>
<dbReference type="GO" id="GO:0030259">
    <property type="term" value="P:lipid glycosylation"/>
    <property type="evidence" value="ECO:0007669"/>
    <property type="project" value="UniProtKB-UniRule"/>
</dbReference>
<dbReference type="GO" id="GO:0009252">
    <property type="term" value="P:peptidoglycan biosynthetic process"/>
    <property type="evidence" value="ECO:0007669"/>
    <property type="project" value="UniProtKB-UniRule"/>
</dbReference>
<dbReference type="GO" id="GO:0008360">
    <property type="term" value="P:regulation of cell shape"/>
    <property type="evidence" value="ECO:0007669"/>
    <property type="project" value="UniProtKB-KW"/>
</dbReference>
<dbReference type="CDD" id="cd03785">
    <property type="entry name" value="GT28_MurG"/>
    <property type="match status" value="1"/>
</dbReference>
<dbReference type="FunFam" id="3.40.50.2000:FF:000016">
    <property type="entry name" value="UDP-N-acetylglucosamine--N-acetylmuramyl-(pentapeptide) pyrophosphoryl-undecaprenol N-acetylglucosamine transferase"/>
    <property type="match status" value="1"/>
</dbReference>
<dbReference type="FunFam" id="3.40.50.2000:FF:000018">
    <property type="entry name" value="UDP-N-acetylglucosamine--N-acetylmuramyl-(pentapeptide) pyrophosphoryl-undecaprenol N-acetylglucosamine transferase"/>
    <property type="match status" value="1"/>
</dbReference>
<dbReference type="Gene3D" id="3.40.50.2000">
    <property type="entry name" value="Glycogen Phosphorylase B"/>
    <property type="match status" value="2"/>
</dbReference>
<dbReference type="HAMAP" id="MF_00033">
    <property type="entry name" value="MurG"/>
    <property type="match status" value="1"/>
</dbReference>
<dbReference type="InterPro" id="IPR006009">
    <property type="entry name" value="GlcNAc_MurG"/>
</dbReference>
<dbReference type="InterPro" id="IPR007235">
    <property type="entry name" value="Glyco_trans_28_C"/>
</dbReference>
<dbReference type="InterPro" id="IPR004276">
    <property type="entry name" value="GlycoTrans_28_N"/>
</dbReference>
<dbReference type="NCBIfam" id="TIGR01133">
    <property type="entry name" value="murG"/>
    <property type="match status" value="1"/>
</dbReference>
<dbReference type="PANTHER" id="PTHR21015:SF22">
    <property type="entry name" value="GLYCOSYLTRANSFERASE"/>
    <property type="match status" value="1"/>
</dbReference>
<dbReference type="PANTHER" id="PTHR21015">
    <property type="entry name" value="UDP-N-ACETYLGLUCOSAMINE--N-ACETYLMURAMYL-(PENTAPEPTIDE) PYROPHOSPHORYL-UNDECAPRENOL N-ACETYLGLUCOSAMINE TRANSFERASE 1"/>
    <property type="match status" value="1"/>
</dbReference>
<dbReference type="Pfam" id="PF04101">
    <property type="entry name" value="Glyco_tran_28_C"/>
    <property type="match status" value="1"/>
</dbReference>
<dbReference type="Pfam" id="PF03033">
    <property type="entry name" value="Glyco_transf_28"/>
    <property type="match status" value="1"/>
</dbReference>
<dbReference type="SUPFAM" id="SSF53756">
    <property type="entry name" value="UDP-Glycosyltransferase/glycogen phosphorylase"/>
    <property type="match status" value="1"/>
</dbReference>
<comment type="function">
    <text evidence="1">Cell wall formation. Catalyzes the transfer of a GlcNAc subunit on undecaprenyl-pyrophosphoryl-MurNAc-pentapeptide (lipid intermediate I) to form undecaprenyl-pyrophosphoryl-MurNAc-(pentapeptide)GlcNAc (lipid intermediate II).</text>
</comment>
<comment type="catalytic activity">
    <reaction evidence="1">
        <text>di-trans,octa-cis-undecaprenyl diphospho-N-acetyl-alpha-D-muramoyl-L-alanyl-D-glutamyl-meso-2,6-diaminopimeloyl-D-alanyl-D-alanine + UDP-N-acetyl-alpha-D-glucosamine = di-trans,octa-cis-undecaprenyl diphospho-[N-acetyl-alpha-D-glucosaminyl-(1-&gt;4)]-N-acetyl-alpha-D-muramoyl-L-alanyl-D-glutamyl-meso-2,6-diaminopimeloyl-D-alanyl-D-alanine + UDP + H(+)</text>
        <dbReference type="Rhea" id="RHEA:31227"/>
        <dbReference type="ChEBI" id="CHEBI:15378"/>
        <dbReference type="ChEBI" id="CHEBI:57705"/>
        <dbReference type="ChEBI" id="CHEBI:58223"/>
        <dbReference type="ChEBI" id="CHEBI:61387"/>
        <dbReference type="ChEBI" id="CHEBI:61388"/>
        <dbReference type="EC" id="2.4.1.227"/>
    </reaction>
</comment>
<comment type="pathway">
    <text evidence="1">Cell wall biogenesis; peptidoglycan biosynthesis.</text>
</comment>
<comment type="subcellular location">
    <subcellularLocation>
        <location evidence="1">Cell inner membrane</location>
        <topology evidence="1">Peripheral membrane protein</topology>
        <orientation evidence="1">Cytoplasmic side</orientation>
    </subcellularLocation>
</comment>
<comment type="similarity">
    <text evidence="1">Belongs to the glycosyltransferase 28 family. MurG subfamily.</text>
</comment>